<dbReference type="EMBL" id="CP001404">
    <property type="protein sequence ID" value="ACP48769.1"/>
    <property type="molecule type" value="Genomic_DNA"/>
</dbReference>
<dbReference type="RefSeq" id="WP_012711191.1">
    <property type="nucleotide sequence ID" value="NC_012623.1"/>
</dbReference>
<dbReference type="SMR" id="C3NI09"/>
<dbReference type="KEGG" id="sin:YN1551_1687"/>
<dbReference type="HOGENOM" id="CLU_196480_1_0_2"/>
<dbReference type="Proteomes" id="UP000006818">
    <property type="component" value="Chromosome"/>
</dbReference>
<dbReference type="GO" id="GO:1990904">
    <property type="term" value="C:ribonucleoprotein complex"/>
    <property type="evidence" value="ECO:0007669"/>
    <property type="project" value="UniProtKB-KW"/>
</dbReference>
<dbReference type="GO" id="GO:0030515">
    <property type="term" value="F:snoRNA binding"/>
    <property type="evidence" value="ECO:0007669"/>
    <property type="project" value="InterPro"/>
</dbReference>
<dbReference type="GO" id="GO:0001522">
    <property type="term" value="P:pseudouridine synthesis"/>
    <property type="evidence" value="ECO:0007669"/>
    <property type="project" value="InterPro"/>
</dbReference>
<dbReference type="GO" id="GO:0006364">
    <property type="term" value="P:rRNA processing"/>
    <property type="evidence" value="ECO:0007669"/>
    <property type="project" value="UniProtKB-UniRule"/>
</dbReference>
<dbReference type="Gene3D" id="2.20.28.40">
    <property type="entry name" value="H/ACA ribonucleoprotein complex, subunit Nop10"/>
    <property type="match status" value="1"/>
</dbReference>
<dbReference type="HAMAP" id="MF_00803">
    <property type="entry name" value="Nop10"/>
    <property type="match status" value="1"/>
</dbReference>
<dbReference type="InterPro" id="IPR007264">
    <property type="entry name" value="H/ACA_rnp_Nop10"/>
</dbReference>
<dbReference type="InterPro" id="IPR036756">
    <property type="entry name" value="H/ACA_rnp_Nop10_sf"/>
</dbReference>
<dbReference type="InterPro" id="IPR023532">
    <property type="entry name" value="Nop10_arc-typ"/>
</dbReference>
<dbReference type="NCBIfam" id="NF009623">
    <property type="entry name" value="PRK13130.1"/>
    <property type="match status" value="1"/>
</dbReference>
<dbReference type="PANTHER" id="PTHR13305:SF0">
    <property type="entry name" value="H_ACA RIBONUCLEOPROTEIN COMPLEX SUBUNIT 3"/>
    <property type="match status" value="1"/>
</dbReference>
<dbReference type="PANTHER" id="PTHR13305">
    <property type="entry name" value="RIBOSOME BIOGENESIS PROTEIN NOP10"/>
    <property type="match status" value="1"/>
</dbReference>
<dbReference type="Pfam" id="PF04135">
    <property type="entry name" value="Nop10p"/>
    <property type="match status" value="1"/>
</dbReference>
<dbReference type="SUPFAM" id="SSF144210">
    <property type="entry name" value="Nop10-like SnoRNP"/>
    <property type="match status" value="1"/>
</dbReference>
<name>NOP10_SACI1</name>
<proteinExistence type="inferred from homology"/>
<organism>
    <name type="scientific">Saccharolobus islandicus (strain Y.N.15.51 / Yellowstone #2)</name>
    <name type="common">Sulfolobus islandicus</name>
    <dbReference type="NCBI Taxonomy" id="419942"/>
    <lineage>
        <taxon>Archaea</taxon>
        <taxon>Thermoproteota</taxon>
        <taxon>Thermoprotei</taxon>
        <taxon>Sulfolobales</taxon>
        <taxon>Sulfolobaceae</taxon>
        <taxon>Saccharolobus</taxon>
    </lineage>
</organism>
<sequence>MKWKMKKCPKDNTYTFKDICPVCGSKTMIPHPSRFSPEDKYVKYRIELKKGVKLNC</sequence>
<gene>
    <name evidence="1" type="primary">nop10</name>
    <name type="ordered locus">YN1551_1687</name>
</gene>
<evidence type="ECO:0000255" key="1">
    <source>
        <dbReference type="HAMAP-Rule" id="MF_00803"/>
    </source>
</evidence>
<feature type="chain" id="PRO_1000212995" description="Ribosome biogenesis protein Nop10">
    <location>
        <begin position="1"/>
        <end position="56"/>
    </location>
</feature>
<comment type="function">
    <text evidence="1">Involved in ribosome biogenesis; more specifically in 18S rRNA pseudouridylation and in cleavage of pre-rRNA.</text>
</comment>
<comment type="similarity">
    <text evidence="1">Belongs to the NOP10 family.</text>
</comment>
<accession>C3NI09</accession>
<protein>
    <recommendedName>
        <fullName evidence="1">Ribosome biogenesis protein Nop10</fullName>
    </recommendedName>
</protein>
<reference key="1">
    <citation type="journal article" date="2009" name="Proc. Natl. Acad. Sci. U.S.A.">
        <title>Biogeography of the Sulfolobus islandicus pan-genome.</title>
        <authorList>
            <person name="Reno M.L."/>
            <person name="Held N.L."/>
            <person name="Fields C.J."/>
            <person name="Burke P.V."/>
            <person name="Whitaker R.J."/>
        </authorList>
    </citation>
    <scope>NUCLEOTIDE SEQUENCE [LARGE SCALE GENOMIC DNA]</scope>
    <source>
        <strain>Y.N.15.51 / Yellowstone #2</strain>
    </source>
</reference>
<keyword id="KW-0687">Ribonucleoprotein</keyword>
<keyword id="KW-0690">Ribosome biogenesis</keyword>
<keyword id="KW-0698">rRNA processing</keyword>